<sequence>MDPSTLISRLEAARSSFHNLERQLADPDVASDPTRLQSIARERSRLEPLVNDYASLQAVQSEREQARELLRDSRGDEEMAHLAQLELDELDIRHEALIERLTLALLPRDPRDERSVMLEIRAGAGGDEACLWAGDLARMYERFSSRRGWTVQPVSASEADLGGFKELILSVKGESVFSELKFEAGVHRVQRVPATESQGRVHTSTATVAVMPEADPVEVQIEPADLEISTARSGGAGGQNVNKVETAVDLMHRPSGIRVFCTQERSQLQNRERAMEILRAKLYERQLAEANARESSARRAQVGTGDRSEKIRTYNAKDNRVTDHRLGRNFSLDPVLQGQMEDVIGACIAEEQRSKLEALSRQSDD</sequence>
<evidence type="ECO:0000255" key="1">
    <source>
        <dbReference type="HAMAP-Rule" id="MF_00093"/>
    </source>
</evidence>
<evidence type="ECO:0000256" key="2">
    <source>
        <dbReference type="SAM" id="MobiDB-lite"/>
    </source>
</evidence>
<name>RF1_SYNPW</name>
<reference key="1">
    <citation type="submission" date="2006-05" db="EMBL/GenBank/DDBJ databases">
        <authorList>
            <consortium name="Genoscope"/>
        </authorList>
    </citation>
    <scope>NUCLEOTIDE SEQUENCE [LARGE SCALE GENOMIC DNA]</scope>
    <source>
        <strain>WH7803</strain>
    </source>
</reference>
<keyword id="KW-0963">Cytoplasm</keyword>
<keyword id="KW-0488">Methylation</keyword>
<keyword id="KW-0648">Protein biosynthesis</keyword>
<keyword id="KW-1185">Reference proteome</keyword>
<protein>
    <recommendedName>
        <fullName evidence="1">Peptide chain release factor 1</fullName>
        <shortName evidence="1">RF-1</shortName>
    </recommendedName>
</protein>
<gene>
    <name evidence="1" type="primary">prfA</name>
    <name type="ordered locus">SynWH7803_0405</name>
</gene>
<organism>
    <name type="scientific">Synechococcus sp. (strain WH7803)</name>
    <dbReference type="NCBI Taxonomy" id="32051"/>
    <lineage>
        <taxon>Bacteria</taxon>
        <taxon>Bacillati</taxon>
        <taxon>Cyanobacteriota</taxon>
        <taxon>Cyanophyceae</taxon>
        <taxon>Synechococcales</taxon>
        <taxon>Synechococcaceae</taxon>
        <taxon>Synechococcus</taxon>
    </lineage>
</organism>
<comment type="function">
    <text evidence="1">Peptide chain release factor 1 directs the termination of translation in response to the peptide chain termination codons UAG and UAA.</text>
</comment>
<comment type="subcellular location">
    <subcellularLocation>
        <location evidence="1">Cytoplasm</location>
    </subcellularLocation>
</comment>
<comment type="PTM">
    <text evidence="1">Methylated by PrmC. Methylation increases the termination efficiency of RF1.</text>
</comment>
<comment type="similarity">
    <text evidence="1">Belongs to the prokaryotic/mitochondrial release factor family.</text>
</comment>
<feature type="chain" id="PRO_1000004962" description="Peptide chain release factor 1">
    <location>
        <begin position="1"/>
        <end position="365"/>
    </location>
</feature>
<feature type="region of interest" description="Disordered" evidence="2">
    <location>
        <begin position="291"/>
        <end position="310"/>
    </location>
</feature>
<feature type="modified residue" description="N5-methylglutamine" evidence="1">
    <location>
        <position position="239"/>
    </location>
</feature>
<accession>A5GIR6</accession>
<dbReference type="EMBL" id="CT971583">
    <property type="protein sequence ID" value="CAK22831.1"/>
    <property type="molecule type" value="Genomic_DNA"/>
</dbReference>
<dbReference type="SMR" id="A5GIR6"/>
<dbReference type="STRING" id="32051.SynWH7803_0405"/>
<dbReference type="KEGG" id="syx:SynWH7803_0405"/>
<dbReference type="eggNOG" id="COG0216">
    <property type="taxonomic scope" value="Bacteria"/>
</dbReference>
<dbReference type="HOGENOM" id="CLU_036856_0_1_3"/>
<dbReference type="OrthoDB" id="9806673at2"/>
<dbReference type="Proteomes" id="UP000001566">
    <property type="component" value="Chromosome"/>
</dbReference>
<dbReference type="GO" id="GO:0005737">
    <property type="term" value="C:cytoplasm"/>
    <property type="evidence" value="ECO:0007669"/>
    <property type="project" value="UniProtKB-SubCell"/>
</dbReference>
<dbReference type="GO" id="GO:0016149">
    <property type="term" value="F:translation release factor activity, codon specific"/>
    <property type="evidence" value="ECO:0007669"/>
    <property type="project" value="UniProtKB-UniRule"/>
</dbReference>
<dbReference type="FunFam" id="3.30.160.20:FF:000004">
    <property type="entry name" value="Peptide chain release factor 1"/>
    <property type="match status" value="1"/>
</dbReference>
<dbReference type="FunFam" id="3.30.70.1660:FF:000002">
    <property type="entry name" value="Peptide chain release factor 1"/>
    <property type="match status" value="1"/>
</dbReference>
<dbReference type="Gene3D" id="3.30.160.20">
    <property type="match status" value="1"/>
</dbReference>
<dbReference type="Gene3D" id="3.30.70.1660">
    <property type="match status" value="1"/>
</dbReference>
<dbReference type="Gene3D" id="6.10.140.1950">
    <property type="match status" value="1"/>
</dbReference>
<dbReference type="HAMAP" id="MF_00093">
    <property type="entry name" value="Rel_fac_1"/>
    <property type="match status" value="1"/>
</dbReference>
<dbReference type="InterPro" id="IPR005139">
    <property type="entry name" value="PCRF"/>
</dbReference>
<dbReference type="InterPro" id="IPR000352">
    <property type="entry name" value="Pep_chain_release_fac_I"/>
</dbReference>
<dbReference type="InterPro" id="IPR045853">
    <property type="entry name" value="Pep_chain_release_fac_I_sf"/>
</dbReference>
<dbReference type="InterPro" id="IPR050057">
    <property type="entry name" value="Prokaryotic/Mito_RF"/>
</dbReference>
<dbReference type="InterPro" id="IPR004373">
    <property type="entry name" value="RF-1"/>
</dbReference>
<dbReference type="NCBIfam" id="TIGR00019">
    <property type="entry name" value="prfA"/>
    <property type="match status" value="1"/>
</dbReference>
<dbReference type="NCBIfam" id="NF001859">
    <property type="entry name" value="PRK00591.1"/>
    <property type="match status" value="1"/>
</dbReference>
<dbReference type="PANTHER" id="PTHR43804">
    <property type="entry name" value="LD18447P"/>
    <property type="match status" value="1"/>
</dbReference>
<dbReference type="PANTHER" id="PTHR43804:SF8">
    <property type="entry name" value="PEPTIDE CHAIN RELEASE FACTOR APG3, CHLOROPLASTIC"/>
    <property type="match status" value="1"/>
</dbReference>
<dbReference type="Pfam" id="PF03462">
    <property type="entry name" value="PCRF"/>
    <property type="match status" value="1"/>
</dbReference>
<dbReference type="Pfam" id="PF00472">
    <property type="entry name" value="RF-1"/>
    <property type="match status" value="1"/>
</dbReference>
<dbReference type="SMART" id="SM00937">
    <property type="entry name" value="PCRF"/>
    <property type="match status" value="1"/>
</dbReference>
<dbReference type="SUPFAM" id="SSF75620">
    <property type="entry name" value="Release factor"/>
    <property type="match status" value="1"/>
</dbReference>
<dbReference type="PROSITE" id="PS00745">
    <property type="entry name" value="RF_PROK_I"/>
    <property type="match status" value="1"/>
</dbReference>
<proteinExistence type="inferred from homology"/>